<reference key="1">
    <citation type="journal article" date="2006" name="Appl. Environ. Microbiol.">
        <title>Genome sequence of the chemolithoautotrophic nitrite-oxidizing bacterium Nitrobacter winogradskyi Nb-255.</title>
        <authorList>
            <person name="Starkenburg S.R."/>
            <person name="Chain P.S.G."/>
            <person name="Sayavedra-Soto L.A."/>
            <person name="Hauser L."/>
            <person name="Land M.L."/>
            <person name="Larimer F.W."/>
            <person name="Malfatti S.A."/>
            <person name="Klotz M.G."/>
            <person name="Bottomley P.J."/>
            <person name="Arp D.J."/>
            <person name="Hickey W.J."/>
        </authorList>
    </citation>
    <scope>NUCLEOTIDE SEQUENCE [LARGE SCALE GENOMIC DNA]</scope>
    <source>
        <strain>ATCC 25391 / DSM 10237 / CIP 104748 / NCIMB 11846 / Nb-255</strain>
    </source>
</reference>
<comment type="function">
    <text evidence="1">Converts heme B (protoheme IX) to heme O by substitution of the vinyl group on carbon 2 of heme B porphyrin ring with a hydroxyethyl farnesyl side group.</text>
</comment>
<comment type="catalytic activity">
    <reaction evidence="1">
        <text>heme b + (2E,6E)-farnesyl diphosphate + H2O = Fe(II)-heme o + diphosphate</text>
        <dbReference type="Rhea" id="RHEA:28070"/>
        <dbReference type="ChEBI" id="CHEBI:15377"/>
        <dbReference type="ChEBI" id="CHEBI:33019"/>
        <dbReference type="ChEBI" id="CHEBI:60344"/>
        <dbReference type="ChEBI" id="CHEBI:60530"/>
        <dbReference type="ChEBI" id="CHEBI:175763"/>
        <dbReference type="EC" id="2.5.1.141"/>
    </reaction>
</comment>
<comment type="pathway">
    <text evidence="1">Porphyrin-containing compound metabolism; heme O biosynthesis; heme O from protoheme: step 1/1.</text>
</comment>
<comment type="subcellular location">
    <subcellularLocation>
        <location evidence="1">Cell inner membrane</location>
        <topology evidence="1">Multi-pass membrane protein</topology>
    </subcellularLocation>
</comment>
<comment type="miscellaneous">
    <text evidence="1">Carbon 2 of the heme B porphyrin ring is defined according to the Fischer nomenclature.</text>
</comment>
<comment type="similarity">
    <text evidence="1">Belongs to the UbiA prenyltransferase family. Protoheme IX farnesyltransferase subfamily.</text>
</comment>
<comment type="sequence caution" evidence="2">
    <conflict type="erroneous initiation">
        <sequence resource="EMBL-CDS" id="ABA04028"/>
    </conflict>
</comment>
<dbReference type="EC" id="2.5.1.141" evidence="1"/>
<dbReference type="EMBL" id="CP000115">
    <property type="protein sequence ID" value="ABA04028.1"/>
    <property type="status" value="ALT_INIT"/>
    <property type="molecule type" value="Genomic_DNA"/>
</dbReference>
<dbReference type="RefSeq" id="WP_011313560.1">
    <property type="nucleotide sequence ID" value="NC_007406.1"/>
</dbReference>
<dbReference type="SMR" id="Q3SUL3"/>
<dbReference type="KEGG" id="nwi:Nwi_0763"/>
<dbReference type="HOGENOM" id="CLU_029631_0_2_5"/>
<dbReference type="OrthoDB" id="9814417at2"/>
<dbReference type="UniPathway" id="UPA00834">
    <property type="reaction ID" value="UER00712"/>
</dbReference>
<dbReference type="Proteomes" id="UP000002531">
    <property type="component" value="Chromosome"/>
</dbReference>
<dbReference type="GO" id="GO:0005886">
    <property type="term" value="C:plasma membrane"/>
    <property type="evidence" value="ECO:0007669"/>
    <property type="project" value="UniProtKB-SubCell"/>
</dbReference>
<dbReference type="GO" id="GO:0008495">
    <property type="term" value="F:protoheme IX farnesyltransferase activity"/>
    <property type="evidence" value="ECO:0007669"/>
    <property type="project" value="UniProtKB-UniRule"/>
</dbReference>
<dbReference type="GO" id="GO:0048034">
    <property type="term" value="P:heme O biosynthetic process"/>
    <property type="evidence" value="ECO:0007669"/>
    <property type="project" value="UniProtKB-UniRule"/>
</dbReference>
<dbReference type="CDD" id="cd13957">
    <property type="entry name" value="PT_UbiA_Cox10"/>
    <property type="match status" value="1"/>
</dbReference>
<dbReference type="Gene3D" id="1.10.357.140">
    <property type="entry name" value="UbiA prenyltransferase"/>
    <property type="match status" value="1"/>
</dbReference>
<dbReference type="HAMAP" id="MF_00154">
    <property type="entry name" value="CyoE_CtaB"/>
    <property type="match status" value="1"/>
</dbReference>
<dbReference type="InterPro" id="IPR006369">
    <property type="entry name" value="Protohaem_IX_farnesylTrfase"/>
</dbReference>
<dbReference type="InterPro" id="IPR000537">
    <property type="entry name" value="UbiA_prenyltransferase"/>
</dbReference>
<dbReference type="InterPro" id="IPR030470">
    <property type="entry name" value="UbiA_prenylTrfase_CS"/>
</dbReference>
<dbReference type="InterPro" id="IPR044878">
    <property type="entry name" value="UbiA_sf"/>
</dbReference>
<dbReference type="NCBIfam" id="TIGR01473">
    <property type="entry name" value="cyoE_ctaB"/>
    <property type="match status" value="1"/>
</dbReference>
<dbReference type="NCBIfam" id="NF003349">
    <property type="entry name" value="PRK04375.1-2"/>
    <property type="match status" value="1"/>
</dbReference>
<dbReference type="PANTHER" id="PTHR43448:SF7">
    <property type="entry name" value="4-HYDROXYBENZOATE SOLANESYLTRANSFERASE"/>
    <property type="match status" value="1"/>
</dbReference>
<dbReference type="PANTHER" id="PTHR43448">
    <property type="entry name" value="PROTOHEME IX FARNESYLTRANSFERASE, MITOCHONDRIAL"/>
    <property type="match status" value="1"/>
</dbReference>
<dbReference type="Pfam" id="PF01040">
    <property type="entry name" value="UbiA"/>
    <property type="match status" value="1"/>
</dbReference>
<dbReference type="PROSITE" id="PS00943">
    <property type="entry name" value="UBIA"/>
    <property type="match status" value="1"/>
</dbReference>
<sequence>MSVVDQKAVELPPRISEAGVADYFALLKPRVMSLVIFTALVGLMIAPGHIHPVLGFIAILCIAVGAGASGALNMALEGDIDVLMSRTANRPIPRGRITRGEAMGFGLTLSFFSVMTLGALVNWYAGGLLAFTIFFYVVIYTMGLKRRTAQNIVIGGAAGALPPVVAWAAATGSLSVEPLLLFLIIFFWTPPHFWALALFRSDDYARAGVPMLPVVAGPDATRLQILLYTIVLVAIAAAPWPLGYFDWVYGVTSLILGAGMLVLAIEVYRHRTGSQALRATRRLFAFSILYLFALFAVLLLDVVAKAVAPLIW</sequence>
<proteinExistence type="inferred from homology"/>
<organism>
    <name type="scientific">Nitrobacter winogradskyi (strain ATCC 25391 / DSM 10237 / CIP 104748 / NCIMB 11846 / Nb-255)</name>
    <dbReference type="NCBI Taxonomy" id="323098"/>
    <lineage>
        <taxon>Bacteria</taxon>
        <taxon>Pseudomonadati</taxon>
        <taxon>Pseudomonadota</taxon>
        <taxon>Alphaproteobacteria</taxon>
        <taxon>Hyphomicrobiales</taxon>
        <taxon>Nitrobacteraceae</taxon>
        <taxon>Nitrobacter</taxon>
    </lineage>
</organism>
<accession>Q3SUL3</accession>
<keyword id="KW-0997">Cell inner membrane</keyword>
<keyword id="KW-1003">Cell membrane</keyword>
<keyword id="KW-0350">Heme biosynthesis</keyword>
<keyword id="KW-0472">Membrane</keyword>
<keyword id="KW-1185">Reference proteome</keyword>
<keyword id="KW-0808">Transferase</keyword>
<keyword id="KW-0812">Transmembrane</keyword>
<keyword id="KW-1133">Transmembrane helix</keyword>
<feature type="chain" id="PRO_0000327098" description="Protoheme IX farnesyltransferase 2">
    <location>
        <begin position="1"/>
        <end position="312"/>
    </location>
</feature>
<feature type="transmembrane region" description="Helical" evidence="1">
    <location>
        <begin position="31"/>
        <end position="51"/>
    </location>
</feature>
<feature type="transmembrane region" description="Helical" evidence="1">
    <location>
        <begin position="52"/>
        <end position="72"/>
    </location>
</feature>
<feature type="transmembrane region" description="Helical" evidence="1">
    <location>
        <begin position="119"/>
        <end position="139"/>
    </location>
</feature>
<feature type="transmembrane region" description="Helical" evidence="1">
    <location>
        <begin position="152"/>
        <end position="172"/>
    </location>
</feature>
<feature type="transmembrane region" description="Helical" evidence="1">
    <location>
        <begin position="179"/>
        <end position="199"/>
    </location>
</feature>
<feature type="transmembrane region" description="Helical" evidence="1">
    <location>
        <begin position="225"/>
        <end position="245"/>
    </location>
</feature>
<feature type="transmembrane region" description="Helical" evidence="1">
    <location>
        <begin position="247"/>
        <end position="267"/>
    </location>
</feature>
<feature type="transmembrane region" description="Helical" evidence="1">
    <location>
        <begin position="283"/>
        <end position="303"/>
    </location>
</feature>
<gene>
    <name evidence="1" type="primary">ctaB2</name>
    <name type="ordered locus">Nwi_0763</name>
</gene>
<protein>
    <recommendedName>
        <fullName evidence="1">Protoheme IX farnesyltransferase 2</fullName>
        <ecNumber evidence="1">2.5.1.141</ecNumber>
    </recommendedName>
    <alternativeName>
        <fullName evidence="1">Heme B farnesyltransferase 2</fullName>
    </alternativeName>
    <alternativeName>
        <fullName evidence="1">Heme O synthase 2</fullName>
    </alternativeName>
</protein>
<evidence type="ECO:0000255" key="1">
    <source>
        <dbReference type="HAMAP-Rule" id="MF_00154"/>
    </source>
</evidence>
<evidence type="ECO:0000305" key="2"/>
<name>COXX2_NITWN</name>